<dbReference type="EC" id="2.7.7.60" evidence="1"/>
<dbReference type="EMBL" id="AE008922">
    <property type="protein sequence ID" value="AAM40996.1"/>
    <property type="molecule type" value="Genomic_DNA"/>
</dbReference>
<dbReference type="RefSeq" id="NP_637072.1">
    <property type="nucleotide sequence ID" value="NC_003902.1"/>
</dbReference>
<dbReference type="RefSeq" id="WP_011036879.1">
    <property type="nucleotide sequence ID" value="NC_003902.1"/>
</dbReference>
<dbReference type="SMR" id="Q8P9Z1"/>
<dbReference type="STRING" id="190485.XCC1702"/>
<dbReference type="EnsemblBacteria" id="AAM40996">
    <property type="protein sequence ID" value="AAM40996"/>
    <property type="gene ID" value="XCC1702"/>
</dbReference>
<dbReference type="KEGG" id="xcc:XCC1702"/>
<dbReference type="PATRIC" id="fig|190485.4.peg.1814"/>
<dbReference type="eggNOG" id="COG1211">
    <property type="taxonomic scope" value="Bacteria"/>
</dbReference>
<dbReference type="HOGENOM" id="CLU_061281_3_1_6"/>
<dbReference type="OrthoDB" id="9806837at2"/>
<dbReference type="UniPathway" id="UPA00056">
    <property type="reaction ID" value="UER00093"/>
</dbReference>
<dbReference type="Proteomes" id="UP000001010">
    <property type="component" value="Chromosome"/>
</dbReference>
<dbReference type="GO" id="GO:0050518">
    <property type="term" value="F:2-C-methyl-D-erythritol 4-phosphate cytidylyltransferase activity"/>
    <property type="evidence" value="ECO:0000318"/>
    <property type="project" value="GO_Central"/>
</dbReference>
<dbReference type="GO" id="GO:0019288">
    <property type="term" value="P:isopentenyl diphosphate biosynthetic process, methylerythritol 4-phosphate pathway"/>
    <property type="evidence" value="ECO:0007669"/>
    <property type="project" value="UniProtKB-UniRule"/>
</dbReference>
<dbReference type="CDD" id="cd02516">
    <property type="entry name" value="CDP-ME_synthetase"/>
    <property type="match status" value="1"/>
</dbReference>
<dbReference type="FunFam" id="3.90.550.10:FF:000003">
    <property type="entry name" value="2-C-methyl-D-erythritol 4-phosphate cytidylyltransferase"/>
    <property type="match status" value="1"/>
</dbReference>
<dbReference type="Gene3D" id="3.90.550.10">
    <property type="entry name" value="Spore Coat Polysaccharide Biosynthesis Protein SpsA, Chain A"/>
    <property type="match status" value="1"/>
</dbReference>
<dbReference type="HAMAP" id="MF_00108">
    <property type="entry name" value="IspD"/>
    <property type="match status" value="1"/>
</dbReference>
<dbReference type="InterPro" id="IPR001228">
    <property type="entry name" value="IspD"/>
</dbReference>
<dbReference type="InterPro" id="IPR034683">
    <property type="entry name" value="IspD/TarI"/>
</dbReference>
<dbReference type="InterPro" id="IPR050088">
    <property type="entry name" value="IspD/TarI_cytidylyltransf_bact"/>
</dbReference>
<dbReference type="InterPro" id="IPR018294">
    <property type="entry name" value="ISPD_synthase_CS"/>
</dbReference>
<dbReference type="InterPro" id="IPR029044">
    <property type="entry name" value="Nucleotide-diphossugar_trans"/>
</dbReference>
<dbReference type="NCBIfam" id="TIGR00453">
    <property type="entry name" value="ispD"/>
    <property type="match status" value="1"/>
</dbReference>
<dbReference type="PANTHER" id="PTHR32125">
    <property type="entry name" value="2-C-METHYL-D-ERYTHRITOL 4-PHOSPHATE CYTIDYLYLTRANSFERASE, CHLOROPLASTIC"/>
    <property type="match status" value="1"/>
</dbReference>
<dbReference type="PANTHER" id="PTHR32125:SF4">
    <property type="entry name" value="2-C-METHYL-D-ERYTHRITOL 4-PHOSPHATE CYTIDYLYLTRANSFERASE, CHLOROPLASTIC"/>
    <property type="match status" value="1"/>
</dbReference>
<dbReference type="Pfam" id="PF01128">
    <property type="entry name" value="IspD"/>
    <property type="match status" value="1"/>
</dbReference>
<dbReference type="SUPFAM" id="SSF53448">
    <property type="entry name" value="Nucleotide-diphospho-sugar transferases"/>
    <property type="match status" value="1"/>
</dbReference>
<dbReference type="PROSITE" id="PS01295">
    <property type="entry name" value="ISPD"/>
    <property type="match status" value="1"/>
</dbReference>
<proteinExistence type="inferred from homology"/>
<reference key="1">
    <citation type="journal article" date="2002" name="Nature">
        <title>Comparison of the genomes of two Xanthomonas pathogens with differing host specificities.</title>
        <authorList>
            <person name="da Silva A.C.R."/>
            <person name="Ferro J.A."/>
            <person name="Reinach F.C."/>
            <person name="Farah C.S."/>
            <person name="Furlan L.R."/>
            <person name="Quaggio R.B."/>
            <person name="Monteiro-Vitorello C.B."/>
            <person name="Van Sluys M.A."/>
            <person name="Almeida N.F. Jr."/>
            <person name="Alves L.M.C."/>
            <person name="do Amaral A.M."/>
            <person name="Bertolini M.C."/>
            <person name="Camargo L.E.A."/>
            <person name="Camarotte G."/>
            <person name="Cannavan F."/>
            <person name="Cardozo J."/>
            <person name="Chambergo F."/>
            <person name="Ciapina L.P."/>
            <person name="Cicarelli R.M.B."/>
            <person name="Coutinho L.L."/>
            <person name="Cursino-Santos J.R."/>
            <person name="El-Dorry H."/>
            <person name="Faria J.B."/>
            <person name="Ferreira A.J.S."/>
            <person name="Ferreira R.C.C."/>
            <person name="Ferro M.I.T."/>
            <person name="Formighieri E.F."/>
            <person name="Franco M.C."/>
            <person name="Greggio C.C."/>
            <person name="Gruber A."/>
            <person name="Katsuyama A.M."/>
            <person name="Kishi L.T."/>
            <person name="Leite R.P."/>
            <person name="Lemos E.G.M."/>
            <person name="Lemos M.V.F."/>
            <person name="Locali E.C."/>
            <person name="Machado M.A."/>
            <person name="Madeira A.M.B.N."/>
            <person name="Martinez-Rossi N.M."/>
            <person name="Martins E.C."/>
            <person name="Meidanis J."/>
            <person name="Menck C.F.M."/>
            <person name="Miyaki C.Y."/>
            <person name="Moon D.H."/>
            <person name="Moreira L.M."/>
            <person name="Novo M.T.M."/>
            <person name="Okura V.K."/>
            <person name="Oliveira M.C."/>
            <person name="Oliveira V.R."/>
            <person name="Pereira H.A."/>
            <person name="Rossi A."/>
            <person name="Sena J.A.D."/>
            <person name="Silva C."/>
            <person name="de Souza R.F."/>
            <person name="Spinola L.A.F."/>
            <person name="Takita M.A."/>
            <person name="Tamura R.E."/>
            <person name="Teixeira E.C."/>
            <person name="Tezza R.I.D."/>
            <person name="Trindade dos Santos M."/>
            <person name="Truffi D."/>
            <person name="Tsai S.M."/>
            <person name="White F.F."/>
            <person name="Setubal J.C."/>
            <person name="Kitajima J.P."/>
        </authorList>
    </citation>
    <scope>NUCLEOTIDE SEQUENCE [LARGE SCALE GENOMIC DNA]</scope>
    <source>
        <strain>ATCC 33913 / DSM 3586 / NCPPB 528 / LMG 568 / P 25</strain>
    </source>
</reference>
<comment type="function">
    <text evidence="1">Catalyzes the formation of 4-diphosphocytidyl-2-C-methyl-D-erythritol from CTP and 2-C-methyl-D-erythritol 4-phosphate (MEP).</text>
</comment>
<comment type="catalytic activity">
    <reaction evidence="1">
        <text>2-C-methyl-D-erythritol 4-phosphate + CTP + H(+) = 4-CDP-2-C-methyl-D-erythritol + diphosphate</text>
        <dbReference type="Rhea" id="RHEA:13429"/>
        <dbReference type="ChEBI" id="CHEBI:15378"/>
        <dbReference type="ChEBI" id="CHEBI:33019"/>
        <dbReference type="ChEBI" id="CHEBI:37563"/>
        <dbReference type="ChEBI" id="CHEBI:57823"/>
        <dbReference type="ChEBI" id="CHEBI:58262"/>
        <dbReference type="EC" id="2.7.7.60"/>
    </reaction>
</comment>
<comment type="pathway">
    <text evidence="1">Isoprenoid biosynthesis; isopentenyl diphosphate biosynthesis via DXP pathway; isopentenyl diphosphate from 1-deoxy-D-xylulose 5-phosphate: step 2/6.</text>
</comment>
<comment type="similarity">
    <text evidence="1">Belongs to the IspD/TarI cytidylyltransferase family. IspD subfamily.</text>
</comment>
<gene>
    <name evidence="1" type="primary">ispD</name>
    <name type="ordered locus">XCC1702</name>
</gene>
<sequence length="265" mass="27564">MTGSVWAIVPAAGRGTRFGGAVPKQYLHAAGQPLMAYTLAALAAHPAVAGIVVAIAPDDADWPGWTAVHAKPVLTCVGGATRAASVLAGLLALPDGVRADDFVLVHDAARPNLALADLDRLLEIGRGDPVGAILAAPVRDTLKRAGDDGGIDGTEPRERLWRALTPQLFRRHQLIRGLTEASAAGVDVTDEAMAIERLGLRPLLVEGAEDNFKVTTPADLARFEFELANRDRGGASREAERSAMPSAATSVFSGARSAASGSEEV</sequence>
<evidence type="ECO:0000255" key="1">
    <source>
        <dbReference type="HAMAP-Rule" id="MF_00108"/>
    </source>
</evidence>
<evidence type="ECO:0000256" key="2">
    <source>
        <dbReference type="SAM" id="MobiDB-lite"/>
    </source>
</evidence>
<feature type="chain" id="PRO_0000075650" description="2-C-methyl-D-erythritol 4-phosphate cytidylyltransferase">
    <location>
        <begin position="1"/>
        <end position="265"/>
    </location>
</feature>
<feature type="region of interest" description="Disordered" evidence="2">
    <location>
        <begin position="231"/>
        <end position="265"/>
    </location>
</feature>
<feature type="compositionally biased region" description="Basic and acidic residues" evidence="2">
    <location>
        <begin position="231"/>
        <end position="241"/>
    </location>
</feature>
<feature type="compositionally biased region" description="Low complexity" evidence="2">
    <location>
        <begin position="253"/>
        <end position="265"/>
    </location>
</feature>
<feature type="site" description="Transition state stabilizer" evidence="1">
    <location>
        <position position="17"/>
    </location>
</feature>
<feature type="site" description="Transition state stabilizer" evidence="1">
    <location>
        <position position="24"/>
    </location>
</feature>
<feature type="site" description="Positions MEP for the nucleophilic attack" evidence="1">
    <location>
        <position position="157"/>
    </location>
</feature>
<feature type="site" description="Positions MEP for the nucleophilic attack" evidence="1">
    <location>
        <position position="213"/>
    </location>
</feature>
<protein>
    <recommendedName>
        <fullName evidence="1">2-C-methyl-D-erythritol 4-phosphate cytidylyltransferase</fullName>
        <ecNumber evidence="1">2.7.7.60</ecNumber>
    </recommendedName>
    <alternativeName>
        <fullName evidence="1">4-diphosphocytidyl-2C-methyl-D-erythritol synthase</fullName>
    </alternativeName>
    <alternativeName>
        <fullName evidence="1">MEP cytidylyltransferase</fullName>
        <shortName evidence="1">MCT</shortName>
    </alternativeName>
</protein>
<name>ISPD_XANCP</name>
<organism>
    <name type="scientific">Xanthomonas campestris pv. campestris (strain ATCC 33913 / DSM 3586 / NCPPB 528 / LMG 568 / P 25)</name>
    <dbReference type="NCBI Taxonomy" id="190485"/>
    <lineage>
        <taxon>Bacteria</taxon>
        <taxon>Pseudomonadati</taxon>
        <taxon>Pseudomonadota</taxon>
        <taxon>Gammaproteobacteria</taxon>
        <taxon>Lysobacterales</taxon>
        <taxon>Lysobacteraceae</taxon>
        <taxon>Xanthomonas</taxon>
    </lineage>
</organism>
<keyword id="KW-0414">Isoprene biosynthesis</keyword>
<keyword id="KW-0548">Nucleotidyltransferase</keyword>
<keyword id="KW-1185">Reference proteome</keyword>
<keyword id="KW-0808">Transferase</keyword>
<accession>Q8P9Z1</accession>